<proteinExistence type="evidence at protein level"/>
<organism>
    <name type="scientific">Tetrahymena thermophila</name>
    <dbReference type="NCBI Taxonomy" id="5911"/>
    <lineage>
        <taxon>Eukaryota</taxon>
        <taxon>Sar</taxon>
        <taxon>Alveolata</taxon>
        <taxon>Ciliophora</taxon>
        <taxon>Intramacronucleata</taxon>
        <taxon>Oligohymenophorea</taxon>
        <taxon>Hymenostomatida</taxon>
        <taxon>Tetrahymenina</taxon>
        <taxon>Tetrahymenidae</taxon>
        <taxon>Tetrahymena</taxon>
    </lineage>
</organism>
<feature type="chain" id="PRO_0000413502" description="Large ribosomal subunit protein eL18">
    <location>
        <begin position="1"/>
        <end position="181"/>
    </location>
</feature>
<feature type="region of interest" description="Disordered" evidence="2">
    <location>
        <begin position="152"/>
        <end position="181"/>
    </location>
</feature>
<feature type="compositionally biased region" description="Basic and acidic residues" evidence="2">
    <location>
        <begin position="169"/>
        <end position="181"/>
    </location>
</feature>
<reference key="1">
    <citation type="submission" date="2006-05" db="EMBL/GenBank/DDBJ databases">
        <title>PEPdbPub Tetrahymena thermophila (TIGR).</title>
        <authorList>
            <person name="Garg J."/>
            <person name="Pearlman R.E."/>
            <person name="Carlton J."/>
        </authorList>
    </citation>
    <scope>NUCLEOTIDE SEQUENCE [LARGE SCALE MRNA]</scope>
</reference>
<reference key="2">
    <citation type="journal article" date="2011" name="Science">
        <title>Crystal structure of the eukaryotic 60S ribosomal subunit in complex with initiation factor 6.</title>
        <authorList>
            <person name="Klinge S."/>
            <person name="Voigts-Hoffmann F."/>
            <person name="Leibundgut M."/>
            <person name="Arpagaus S."/>
            <person name="Ban N."/>
        </authorList>
    </citation>
    <scope>X-RAY CRYSTALLOGRAPHY (3.52 ANGSTROMS) OF 60S RIBOSOME</scope>
</reference>
<evidence type="ECO:0000250" key="1"/>
<evidence type="ECO:0000256" key="2">
    <source>
        <dbReference type="SAM" id="MobiDB-lite"/>
    </source>
</evidence>
<evidence type="ECO:0000305" key="3"/>
<name>RL18_TETTH</name>
<comment type="subcellular location">
    <subcellularLocation>
        <location evidence="1">Cytoplasm</location>
    </subcellularLocation>
</comment>
<comment type="similarity">
    <text evidence="3">Belongs to the eukaryotic ribosomal protein eL18 family.</text>
</comment>
<dbReference type="EMBL" id="CN590960">
    <property type="status" value="NOT_ANNOTATED_CDS"/>
    <property type="molecule type" value="mRNA"/>
</dbReference>
<dbReference type="PDB" id="4V8P">
    <property type="method" value="X-ray"/>
    <property type="resolution" value="3.52 A"/>
    <property type="chains" value="BN/CN/EN/GN=1-181"/>
</dbReference>
<dbReference type="PDBsum" id="4V8P"/>
<dbReference type="SMR" id="P0DJ17"/>
<dbReference type="IntAct" id="P0DJ17">
    <property type="interactions" value="1"/>
</dbReference>
<dbReference type="GO" id="GO:0022625">
    <property type="term" value="C:cytosolic large ribosomal subunit"/>
    <property type="evidence" value="ECO:0007669"/>
    <property type="project" value="TreeGrafter"/>
</dbReference>
<dbReference type="GO" id="GO:0003723">
    <property type="term" value="F:RNA binding"/>
    <property type="evidence" value="ECO:0007669"/>
    <property type="project" value="TreeGrafter"/>
</dbReference>
<dbReference type="GO" id="GO:0003735">
    <property type="term" value="F:structural constituent of ribosome"/>
    <property type="evidence" value="ECO:0007669"/>
    <property type="project" value="InterPro"/>
</dbReference>
<dbReference type="GO" id="GO:0006412">
    <property type="term" value="P:translation"/>
    <property type="evidence" value="ECO:0007669"/>
    <property type="project" value="InterPro"/>
</dbReference>
<dbReference type="FunFam" id="3.100.10.10:FF:000001">
    <property type="entry name" value="60S ribosomal protein L18"/>
    <property type="match status" value="1"/>
</dbReference>
<dbReference type="Gene3D" id="3.100.10.10">
    <property type="match status" value="1"/>
</dbReference>
<dbReference type="InterPro" id="IPR000039">
    <property type="entry name" value="Ribosomal_eL18"/>
</dbReference>
<dbReference type="InterPro" id="IPR021131">
    <property type="entry name" value="Ribosomal_uL15/eL18"/>
</dbReference>
<dbReference type="InterPro" id="IPR036227">
    <property type="entry name" value="Ribosomal_uL15/eL18_sf"/>
</dbReference>
<dbReference type="PANTHER" id="PTHR10934">
    <property type="entry name" value="60S RIBOSOMAL PROTEIN L18"/>
    <property type="match status" value="1"/>
</dbReference>
<dbReference type="PANTHER" id="PTHR10934:SF2">
    <property type="entry name" value="LARGE RIBOSOMAL SUBUNIT PROTEIN EL18"/>
    <property type="match status" value="1"/>
</dbReference>
<dbReference type="Pfam" id="PF17135">
    <property type="entry name" value="Ribosomal_L18"/>
    <property type="match status" value="1"/>
</dbReference>
<dbReference type="SUPFAM" id="SSF52080">
    <property type="entry name" value="Ribosomal proteins L15p and L18e"/>
    <property type="match status" value="1"/>
</dbReference>
<keyword id="KW-0002">3D-structure</keyword>
<keyword id="KW-0963">Cytoplasm</keyword>
<keyword id="KW-0687">Ribonucleoprotein</keyword>
<keyword id="KW-0689">Ribosomal protein</keyword>
<protein>
    <recommendedName>
        <fullName evidence="3">Large ribosomal subunit protein eL18</fullName>
    </recommendedName>
    <alternativeName>
        <fullName>60S ribosomal protein L18</fullName>
    </alternativeName>
</protein>
<sequence length="181" mass="20589">MAIDLHKQGRVVKRSVVRQTKSTNVYHKLLIKLYKFLVRRTDSKFNQNILKRLSSSRLNKFPLSLSRIVKNLNETNKEQVIVSTSTVTNDERLLTVPKLTVCALKFTETARKRILAAGGKCLTFDQLALKAPTGTNCFLLRAPKSREAYRHWGKAPGQRGSHSAPYVRSEGRKFERAHGLK</sequence>
<gene>
    <name type="primary">RPL18</name>
</gene>
<accession>P0DJ17</accession>